<evidence type="ECO:0000255" key="1">
    <source>
        <dbReference type="HAMAP-Rule" id="MF_00203"/>
    </source>
</evidence>
<sequence length="610" mass="68188">MSDQFDAKAFLKTVTSQPGVYRMYDAGGTVIYVGKAKDLKKRLSSYFRSNLASRKTEALVAQIQQIDVTVTHTETEALLLEHNYIKLYQPRYNVLLRDDKSYPFIFLSGDTHPRLAMHRGAKHAKGEYFGPFPNGYAVRETLALLQKIFPIRQCENSVYRNRSRPCLQYQIGRCLGPCVEGLVSEEEYAQQVEYVRLFLSGKDDQVLTQLISRMETASQNLEFEEAARIRDQIQAVRRVTEKQFVSNTGDDLDVIGVAFDAGMACVHVLFIRQGKVLGSRSYFPKVPGGTELSEVVETFVGQFYLQGSQMRTLPGEILLDFNLSDKTLLADSLSELAGRKINVQTKPRGDRARYLKLARTNAATALTSKLSQQSTVHQRLTALASVLKLPEVKRMECFDISHTMGEQTVASCVVFDANGPLRAEYRRYNITGITPGDDYAAMNQVLRRRYGKAIDDSKIPDVILIDGGKGQLAQAKNVFAELDVSWDKNHPLLLGVAKGADRKAGLETLFFEPEGEGFSLPPDSPALHVIQHIRDESHDHAIGGHRKKRAKVKNTSSLETIEGVGPKRRQMLLKYMGGLQGLRNASVEEIAKVPGISQGLAEKIFWSLKH</sequence>
<accession>A8A1B5</accession>
<keyword id="KW-0963">Cytoplasm</keyword>
<keyword id="KW-0227">DNA damage</keyword>
<keyword id="KW-0228">DNA excision</keyword>
<keyword id="KW-0234">DNA repair</keyword>
<keyword id="KW-0267">Excision nuclease</keyword>
<keyword id="KW-0742">SOS response</keyword>
<gene>
    <name evidence="1" type="primary">uvrC</name>
    <name type="ordered locus">EcHS_A2011</name>
</gene>
<reference key="1">
    <citation type="journal article" date="2008" name="J. Bacteriol.">
        <title>The pangenome structure of Escherichia coli: comparative genomic analysis of E. coli commensal and pathogenic isolates.</title>
        <authorList>
            <person name="Rasko D.A."/>
            <person name="Rosovitz M.J."/>
            <person name="Myers G.S.A."/>
            <person name="Mongodin E.F."/>
            <person name="Fricke W.F."/>
            <person name="Gajer P."/>
            <person name="Crabtree J."/>
            <person name="Sebaihia M."/>
            <person name="Thomson N.R."/>
            <person name="Chaudhuri R."/>
            <person name="Henderson I.R."/>
            <person name="Sperandio V."/>
            <person name="Ravel J."/>
        </authorList>
    </citation>
    <scope>NUCLEOTIDE SEQUENCE [LARGE SCALE GENOMIC DNA]</scope>
    <source>
        <strain>HS</strain>
    </source>
</reference>
<protein>
    <recommendedName>
        <fullName evidence="1">UvrABC system protein C</fullName>
        <shortName evidence="1">Protein UvrC</shortName>
    </recommendedName>
    <alternativeName>
        <fullName evidence="1">Excinuclease ABC subunit C</fullName>
    </alternativeName>
</protein>
<proteinExistence type="inferred from homology"/>
<organism>
    <name type="scientific">Escherichia coli O9:H4 (strain HS)</name>
    <dbReference type="NCBI Taxonomy" id="331112"/>
    <lineage>
        <taxon>Bacteria</taxon>
        <taxon>Pseudomonadati</taxon>
        <taxon>Pseudomonadota</taxon>
        <taxon>Gammaproteobacteria</taxon>
        <taxon>Enterobacterales</taxon>
        <taxon>Enterobacteriaceae</taxon>
        <taxon>Escherichia</taxon>
    </lineage>
</organism>
<comment type="function">
    <text evidence="1">The UvrABC repair system catalyzes the recognition and processing of DNA lesions. UvrC both incises the 5' and 3' sides of the lesion. The N-terminal half is responsible for the 3' incision and the C-terminal half is responsible for the 5' incision.</text>
</comment>
<comment type="subunit">
    <text evidence="1">Interacts with UvrB in an incision complex.</text>
</comment>
<comment type="subcellular location">
    <subcellularLocation>
        <location evidence="1">Cytoplasm</location>
    </subcellularLocation>
</comment>
<comment type="similarity">
    <text evidence="1">Belongs to the UvrC family.</text>
</comment>
<dbReference type="EMBL" id="CP000802">
    <property type="protein sequence ID" value="ABV06319.1"/>
    <property type="molecule type" value="Genomic_DNA"/>
</dbReference>
<dbReference type="RefSeq" id="WP_001283421.1">
    <property type="nucleotide sequence ID" value="NC_009800.1"/>
</dbReference>
<dbReference type="SMR" id="A8A1B5"/>
<dbReference type="GeneID" id="93776218"/>
<dbReference type="KEGG" id="ecx:EcHS_A2011"/>
<dbReference type="HOGENOM" id="CLU_014841_3_0_6"/>
<dbReference type="GO" id="GO:0005737">
    <property type="term" value="C:cytoplasm"/>
    <property type="evidence" value="ECO:0007669"/>
    <property type="project" value="UniProtKB-SubCell"/>
</dbReference>
<dbReference type="GO" id="GO:0009380">
    <property type="term" value="C:excinuclease repair complex"/>
    <property type="evidence" value="ECO:0007669"/>
    <property type="project" value="InterPro"/>
</dbReference>
<dbReference type="GO" id="GO:0003677">
    <property type="term" value="F:DNA binding"/>
    <property type="evidence" value="ECO:0007669"/>
    <property type="project" value="UniProtKB-UniRule"/>
</dbReference>
<dbReference type="GO" id="GO:0009381">
    <property type="term" value="F:excinuclease ABC activity"/>
    <property type="evidence" value="ECO:0007669"/>
    <property type="project" value="UniProtKB-UniRule"/>
</dbReference>
<dbReference type="GO" id="GO:0006289">
    <property type="term" value="P:nucleotide-excision repair"/>
    <property type="evidence" value="ECO:0007669"/>
    <property type="project" value="UniProtKB-UniRule"/>
</dbReference>
<dbReference type="GO" id="GO:0009432">
    <property type="term" value="P:SOS response"/>
    <property type="evidence" value="ECO:0007669"/>
    <property type="project" value="UniProtKB-UniRule"/>
</dbReference>
<dbReference type="CDD" id="cd10434">
    <property type="entry name" value="GIY-YIG_UvrC_Cho"/>
    <property type="match status" value="1"/>
</dbReference>
<dbReference type="FunFam" id="1.10.150.20:FF:000005">
    <property type="entry name" value="UvrABC system protein C"/>
    <property type="match status" value="1"/>
</dbReference>
<dbReference type="FunFam" id="3.30.420.340:FF:000001">
    <property type="entry name" value="UvrABC system protein C"/>
    <property type="match status" value="1"/>
</dbReference>
<dbReference type="FunFam" id="3.40.1440.10:FF:000001">
    <property type="entry name" value="UvrABC system protein C"/>
    <property type="match status" value="1"/>
</dbReference>
<dbReference type="FunFam" id="4.10.860.10:FF:000002">
    <property type="entry name" value="UvrABC system protein C"/>
    <property type="match status" value="1"/>
</dbReference>
<dbReference type="Gene3D" id="1.10.150.20">
    <property type="entry name" value="5' to 3' exonuclease, C-terminal subdomain"/>
    <property type="match status" value="1"/>
</dbReference>
<dbReference type="Gene3D" id="3.40.1440.10">
    <property type="entry name" value="GIY-YIG endonuclease"/>
    <property type="match status" value="1"/>
</dbReference>
<dbReference type="Gene3D" id="4.10.860.10">
    <property type="entry name" value="UVR domain"/>
    <property type="match status" value="1"/>
</dbReference>
<dbReference type="Gene3D" id="3.30.420.340">
    <property type="entry name" value="UvrC, RNAse H endonuclease domain"/>
    <property type="match status" value="1"/>
</dbReference>
<dbReference type="HAMAP" id="MF_00203">
    <property type="entry name" value="UvrC"/>
    <property type="match status" value="1"/>
</dbReference>
<dbReference type="InterPro" id="IPR000305">
    <property type="entry name" value="GIY-YIG_endonuc"/>
</dbReference>
<dbReference type="InterPro" id="IPR035901">
    <property type="entry name" value="GIY-YIG_endonuc_sf"/>
</dbReference>
<dbReference type="InterPro" id="IPR047296">
    <property type="entry name" value="GIY-YIG_UvrC_Cho"/>
</dbReference>
<dbReference type="InterPro" id="IPR003583">
    <property type="entry name" value="Hlx-hairpin-Hlx_DNA-bd_motif"/>
</dbReference>
<dbReference type="InterPro" id="IPR010994">
    <property type="entry name" value="RuvA_2-like"/>
</dbReference>
<dbReference type="InterPro" id="IPR001943">
    <property type="entry name" value="UVR_dom"/>
</dbReference>
<dbReference type="InterPro" id="IPR036876">
    <property type="entry name" value="UVR_dom_sf"/>
</dbReference>
<dbReference type="InterPro" id="IPR050066">
    <property type="entry name" value="UvrABC_protein_C"/>
</dbReference>
<dbReference type="InterPro" id="IPR004791">
    <property type="entry name" value="UvrC"/>
</dbReference>
<dbReference type="InterPro" id="IPR001162">
    <property type="entry name" value="UvrC_RNase_H_dom"/>
</dbReference>
<dbReference type="InterPro" id="IPR038476">
    <property type="entry name" value="UvrC_RNase_H_dom_sf"/>
</dbReference>
<dbReference type="NCBIfam" id="NF001824">
    <property type="entry name" value="PRK00558.1-5"/>
    <property type="match status" value="1"/>
</dbReference>
<dbReference type="NCBIfam" id="TIGR00194">
    <property type="entry name" value="uvrC"/>
    <property type="match status" value="1"/>
</dbReference>
<dbReference type="PANTHER" id="PTHR30562:SF1">
    <property type="entry name" value="UVRABC SYSTEM PROTEIN C"/>
    <property type="match status" value="1"/>
</dbReference>
<dbReference type="PANTHER" id="PTHR30562">
    <property type="entry name" value="UVRC/OXIDOREDUCTASE"/>
    <property type="match status" value="1"/>
</dbReference>
<dbReference type="Pfam" id="PF01541">
    <property type="entry name" value="GIY-YIG"/>
    <property type="match status" value="1"/>
</dbReference>
<dbReference type="Pfam" id="PF14520">
    <property type="entry name" value="HHH_5"/>
    <property type="match status" value="1"/>
</dbReference>
<dbReference type="Pfam" id="PF02151">
    <property type="entry name" value="UVR"/>
    <property type="match status" value="1"/>
</dbReference>
<dbReference type="Pfam" id="PF22920">
    <property type="entry name" value="UvrC_RNaseH"/>
    <property type="match status" value="1"/>
</dbReference>
<dbReference type="Pfam" id="PF08459">
    <property type="entry name" value="UvrC_RNaseH_dom"/>
    <property type="match status" value="1"/>
</dbReference>
<dbReference type="SMART" id="SM00465">
    <property type="entry name" value="GIYc"/>
    <property type="match status" value="1"/>
</dbReference>
<dbReference type="SMART" id="SM00278">
    <property type="entry name" value="HhH1"/>
    <property type="match status" value="2"/>
</dbReference>
<dbReference type="SUPFAM" id="SSF46600">
    <property type="entry name" value="C-terminal UvrC-binding domain of UvrB"/>
    <property type="match status" value="1"/>
</dbReference>
<dbReference type="SUPFAM" id="SSF82771">
    <property type="entry name" value="GIY-YIG endonuclease"/>
    <property type="match status" value="1"/>
</dbReference>
<dbReference type="SUPFAM" id="SSF47781">
    <property type="entry name" value="RuvA domain 2-like"/>
    <property type="match status" value="1"/>
</dbReference>
<dbReference type="PROSITE" id="PS50164">
    <property type="entry name" value="GIY_YIG"/>
    <property type="match status" value="1"/>
</dbReference>
<dbReference type="PROSITE" id="PS50151">
    <property type="entry name" value="UVR"/>
    <property type="match status" value="1"/>
</dbReference>
<dbReference type="PROSITE" id="PS50165">
    <property type="entry name" value="UVRC"/>
    <property type="match status" value="1"/>
</dbReference>
<name>UVRC_ECOHS</name>
<feature type="chain" id="PRO_1000077781" description="UvrABC system protein C">
    <location>
        <begin position="1"/>
        <end position="610"/>
    </location>
</feature>
<feature type="domain" description="GIY-YIG" evidence="1">
    <location>
        <begin position="16"/>
        <end position="94"/>
    </location>
</feature>
<feature type="domain" description="UVR" evidence="1">
    <location>
        <begin position="204"/>
        <end position="239"/>
    </location>
</feature>